<gene>
    <name type="primary">urm1</name>
    <name type="ORF">DDB_G0283737</name>
</gene>
<proteinExistence type="inferred from homology"/>
<organism>
    <name type="scientific">Dictyostelium discoideum</name>
    <name type="common">Social amoeba</name>
    <dbReference type="NCBI Taxonomy" id="44689"/>
    <lineage>
        <taxon>Eukaryota</taxon>
        <taxon>Amoebozoa</taxon>
        <taxon>Evosea</taxon>
        <taxon>Eumycetozoa</taxon>
        <taxon>Dictyostelia</taxon>
        <taxon>Dictyosteliales</taxon>
        <taxon>Dictyosteliaceae</taxon>
        <taxon>Dictyostelium</taxon>
    </lineage>
</organism>
<name>URM1_DICDI</name>
<keyword id="KW-0963">Cytoplasm</keyword>
<keyword id="KW-1017">Isopeptide bond</keyword>
<keyword id="KW-1185">Reference proteome</keyword>
<keyword id="KW-0819">tRNA processing</keyword>
<keyword id="KW-0833">Ubl conjugation pathway</keyword>
<evidence type="ECO:0000255" key="1">
    <source>
        <dbReference type="HAMAP-Rule" id="MF_03048"/>
    </source>
</evidence>
<feature type="chain" id="PRO_0000330337" description="Ubiquitin-related modifier 1 homolog">
    <location>
        <begin position="1"/>
        <end position="96"/>
    </location>
</feature>
<feature type="modified residue" description="1-thioglycine" evidence="1">
    <location>
        <position position="96"/>
    </location>
</feature>
<feature type="cross-link" description="Glycyl lysine isopeptide (Gly-Lys) (interchain with K-? in acceptor proteins)" evidence="1">
    <location>
        <position position="96"/>
    </location>
</feature>
<protein>
    <recommendedName>
        <fullName evidence="1">Ubiquitin-related modifier 1 homolog</fullName>
    </recommendedName>
</protein>
<dbReference type="EMBL" id="AAFI02000056">
    <property type="protein sequence ID" value="EAL65635.1"/>
    <property type="molecule type" value="Genomic_DNA"/>
</dbReference>
<dbReference type="RefSeq" id="XP_638993.1">
    <property type="nucleotide sequence ID" value="XM_633901.1"/>
</dbReference>
<dbReference type="SMR" id="Q54QN0"/>
<dbReference type="FunCoup" id="Q54QN0">
    <property type="interactions" value="754"/>
</dbReference>
<dbReference type="STRING" id="44689.Q54QN0"/>
<dbReference type="PaxDb" id="44689-DDB0185658"/>
<dbReference type="EnsemblProtists" id="EAL65635">
    <property type="protein sequence ID" value="EAL65635"/>
    <property type="gene ID" value="DDB_G0283737"/>
</dbReference>
<dbReference type="GeneID" id="8624239"/>
<dbReference type="KEGG" id="ddi:DDB_G0283737"/>
<dbReference type="dictyBase" id="DDB_G0283737">
    <property type="gene designation" value="urm1"/>
</dbReference>
<dbReference type="VEuPathDB" id="AmoebaDB:DDB_G0283737"/>
<dbReference type="eggNOG" id="KOG4146">
    <property type="taxonomic scope" value="Eukaryota"/>
</dbReference>
<dbReference type="HOGENOM" id="CLU_148208_0_1_1"/>
<dbReference type="InParanoid" id="Q54QN0"/>
<dbReference type="OMA" id="DYELQPN"/>
<dbReference type="PhylomeDB" id="Q54QN0"/>
<dbReference type="UniPathway" id="UPA00988"/>
<dbReference type="PRO" id="PR:Q54QN0"/>
<dbReference type="Proteomes" id="UP000002195">
    <property type="component" value="Chromosome 4"/>
</dbReference>
<dbReference type="GO" id="GO:0005829">
    <property type="term" value="C:cytosol"/>
    <property type="evidence" value="ECO:0007669"/>
    <property type="project" value="UniProtKB-UniRule"/>
</dbReference>
<dbReference type="GO" id="GO:0005634">
    <property type="term" value="C:nucleus"/>
    <property type="evidence" value="ECO:0000318"/>
    <property type="project" value="GO_Central"/>
</dbReference>
<dbReference type="GO" id="GO:0031386">
    <property type="term" value="F:protein tag activity"/>
    <property type="evidence" value="ECO:0000318"/>
    <property type="project" value="GO_Central"/>
</dbReference>
<dbReference type="GO" id="GO:0032447">
    <property type="term" value="P:protein urmylation"/>
    <property type="evidence" value="ECO:0000318"/>
    <property type="project" value="GO_Central"/>
</dbReference>
<dbReference type="GO" id="GO:0034227">
    <property type="term" value="P:tRNA thio-modification"/>
    <property type="evidence" value="ECO:0007669"/>
    <property type="project" value="UniProtKB-UniRule"/>
</dbReference>
<dbReference type="GO" id="GO:0002098">
    <property type="term" value="P:tRNA wobble uridine modification"/>
    <property type="evidence" value="ECO:0007669"/>
    <property type="project" value="UniProtKB-UniRule"/>
</dbReference>
<dbReference type="CDD" id="cd01764">
    <property type="entry name" value="Ubl_Urm1"/>
    <property type="match status" value="1"/>
</dbReference>
<dbReference type="Gene3D" id="3.10.20.30">
    <property type="match status" value="1"/>
</dbReference>
<dbReference type="HAMAP" id="MF_03048">
    <property type="entry name" value="Urm1"/>
    <property type="match status" value="1"/>
</dbReference>
<dbReference type="InterPro" id="IPR012675">
    <property type="entry name" value="Beta-grasp_dom_sf"/>
</dbReference>
<dbReference type="InterPro" id="IPR016155">
    <property type="entry name" value="Mopterin_synth/thiamin_S_b"/>
</dbReference>
<dbReference type="InterPro" id="IPR015221">
    <property type="entry name" value="Urm1"/>
</dbReference>
<dbReference type="PANTHER" id="PTHR14986">
    <property type="entry name" value="RURM1 PROTEIN"/>
    <property type="match status" value="1"/>
</dbReference>
<dbReference type="Pfam" id="PF09138">
    <property type="entry name" value="Urm1"/>
    <property type="match status" value="1"/>
</dbReference>
<dbReference type="PIRSF" id="PIRSF037379">
    <property type="entry name" value="Ubiquitin-related_modifier_1"/>
    <property type="match status" value="1"/>
</dbReference>
<dbReference type="SUPFAM" id="SSF54285">
    <property type="entry name" value="MoaD/ThiS"/>
    <property type="match status" value="1"/>
</dbReference>
<sequence length="96" mass="11008">MKVKIELSGGLELLFDKKKVHEIEFSDKNEIPLKDLILYMRDNLLKERSELFVVDDTVRPGILVLINDADWELFGGISYNVEDKDTIIFISTLHGG</sequence>
<reference key="1">
    <citation type="journal article" date="2005" name="Nature">
        <title>The genome of the social amoeba Dictyostelium discoideum.</title>
        <authorList>
            <person name="Eichinger L."/>
            <person name="Pachebat J.A."/>
            <person name="Gloeckner G."/>
            <person name="Rajandream M.A."/>
            <person name="Sucgang R."/>
            <person name="Berriman M."/>
            <person name="Song J."/>
            <person name="Olsen R."/>
            <person name="Szafranski K."/>
            <person name="Xu Q."/>
            <person name="Tunggal B."/>
            <person name="Kummerfeld S."/>
            <person name="Madera M."/>
            <person name="Konfortov B.A."/>
            <person name="Rivero F."/>
            <person name="Bankier A.T."/>
            <person name="Lehmann R."/>
            <person name="Hamlin N."/>
            <person name="Davies R."/>
            <person name="Gaudet P."/>
            <person name="Fey P."/>
            <person name="Pilcher K."/>
            <person name="Chen G."/>
            <person name="Saunders D."/>
            <person name="Sodergren E.J."/>
            <person name="Davis P."/>
            <person name="Kerhornou A."/>
            <person name="Nie X."/>
            <person name="Hall N."/>
            <person name="Anjard C."/>
            <person name="Hemphill L."/>
            <person name="Bason N."/>
            <person name="Farbrother P."/>
            <person name="Desany B."/>
            <person name="Just E."/>
            <person name="Morio T."/>
            <person name="Rost R."/>
            <person name="Churcher C.M."/>
            <person name="Cooper J."/>
            <person name="Haydock S."/>
            <person name="van Driessche N."/>
            <person name="Cronin A."/>
            <person name="Goodhead I."/>
            <person name="Muzny D.M."/>
            <person name="Mourier T."/>
            <person name="Pain A."/>
            <person name="Lu M."/>
            <person name="Harper D."/>
            <person name="Lindsay R."/>
            <person name="Hauser H."/>
            <person name="James K.D."/>
            <person name="Quiles M."/>
            <person name="Madan Babu M."/>
            <person name="Saito T."/>
            <person name="Buchrieser C."/>
            <person name="Wardroper A."/>
            <person name="Felder M."/>
            <person name="Thangavelu M."/>
            <person name="Johnson D."/>
            <person name="Knights A."/>
            <person name="Loulseged H."/>
            <person name="Mungall K.L."/>
            <person name="Oliver K."/>
            <person name="Price C."/>
            <person name="Quail M.A."/>
            <person name="Urushihara H."/>
            <person name="Hernandez J."/>
            <person name="Rabbinowitsch E."/>
            <person name="Steffen D."/>
            <person name="Sanders M."/>
            <person name="Ma J."/>
            <person name="Kohara Y."/>
            <person name="Sharp S."/>
            <person name="Simmonds M.N."/>
            <person name="Spiegler S."/>
            <person name="Tivey A."/>
            <person name="Sugano S."/>
            <person name="White B."/>
            <person name="Walker D."/>
            <person name="Woodward J.R."/>
            <person name="Winckler T."/>
            <person name="Tanaka Y."/>
            <person name="Shaulsky G."/>
            <person name="Schleicher M."/>
            <person name="Weinstock G.M."/>
            <person name="Rosenthal A."/>
            <person name="Cox E.C."/>
            <person name="Chisholm R.L."/>
            <person name="Gibbs R.A."/>
            <person name="Loomis W.F."/>
            <person name="Platzer M."/>
            <person name="Kay R.R."/>
            <person name="Williams J.G."/>
            <person name="Dear P.H."/>
            <person name="Noegel A.A."/>
            <person name="Barrell B.G."/>
            <person name="Kuspa A."/>
        </authorList>
    </citation>
    <scope>NUCLEOTIDE SEQUENCE [LARGE SCALE GENOMIC DNA]</scope>
    <source>
        <strain>AX4</strain>
    </source>
</reference>
<comment type="function">
    <text evidence="1">Acts as a sulfur carrier required for 2-thiolation of mcm(5)S(2)U at tRNA wobble positions of cytosolic tRNA(Lys), tRNA(Glu) and tRNA(Gln). Serves as sulfur donor in tRNA 2-thiolation reaction by being thiocarboxylated (-COSH) at its C-terminus by the MOCS3 homolog. The sulfur is then transferred to tRNA to form 2-thiolation of mcm(5)S(2)U. Also acts as a ubiquitin-like protein (UBL) that is covalently conjugated via an isopeptide bond to lysine residues of target proteins. The thiocarboxylated form serves as substrate for conjugation and oxidative stress specifically induces the formation of UBL-protein conjugates.</text>
</comment>
<comment type="pathway">
    <text evidence="1">tRNA modification; 5-methoxycarbonylmethyl-2-thiouridine-tRNA biosynthesis.</text>
</comment>
<comment type="subcellular location">
    <subcellularLocation>
        <location evidence="1">Cytoplasm</location>
    </subcellularLocation>
</comment>
<comment type="PTM">
    <text evidence="1">C-terminal thiocarboxylation occurs in 2 steps, it is first acyl-adenylated (-COAMP) via the hesA/moeB/thiF part of the MOCS3 homolog, then thiocarboxylated (-COSH) via the rhodanese domain of the MOCS3 homolog.</text>
</comment>
<comment type="similarity">
    <text evidence="1">Belongs to the URM1 family.</text>
</comment>
<accession>Q54QN0</accession>